<accession>Q751Z6</accession>
<protein>
    <recommendedName>
        <fullName>Probable kinetochore protein SPC25</fullName>
    </recommendedName>
</protein>
<reference key="1">
    <citation type="journal article" date="2004" name="Science">
        <title>The Ashbya gossypii genome as a tool for mapping the ancient Saccharomyces cerevisiae genome.</title>
        <authorList>
            <person name="Dietrich F.S."/>
            <person name="Voegeli S."/>
            <person name="Brachat S."/>
            <person name="Lerch A."/>
            <person name="Gates K."/>
            <person name="Steiner S."/>
            <person name="Mohr C."/>
            <person name="Poehlmann R."/>
            <person name="Luedi P."/>
            <person name="Choi S."/>
            <person name="Wing R.A."/>
            <person name="Flavier A."/>
            <person name="Gaffney T.D."/>
            <person name="Philippsen P."/>
        </authorList>
    </citation>
    <scope>NUCLEOTIDE SEQUENCE [LARGE SCALE GENOMIC DNA]</scope>
    <source>
        <strain>ATCC 10895 / CBS 109.51 / FGSC 9923 / NRRL Y-1056</strain>
    </source>
</reference>
<reference key="2">
    <citation type="journal article" date="2013" name="G3 (Bethesda)">
        <title>Genomes of Ashbya fungi isolated from insects reveal four mating-type loci, numerous translocations, lack of transposons, and distinct gene duplications.</title>
        <authorList>
            <person name="Dietrich F.S."/>
            <person name="Voegeli S."/>
            <person name="Kuo S."/>
            <person name="Philippsen P."/>
        </authorList>
    </citation>
    <scope>GENOME REANNOTATION</scope>
    <source>
        <strain>ATCC 10895 / CBS 109.51 / FGSC 9923 / NRRL Y-1056</strain>
    </source>
</reference>
<comment type="function">
    <text evidence="1">Acts as a component of the essential kinetochore-associated NDC80 complex, which is required for chromosome segregation and spindle checkpoint activity.</text>
</comment>
<comment type="subunit">
    <text evidence="1">Component of the NDC80 complex, which consists of NDC80, NUF2, SPC24 and SPC25.</text>
</comment>
<comment type="subcellular location">
    <subcellularLocation>
        <location evidence="2">Nucleus</location>
    </subcellularLocation>
    <subcellularLocation>
        <location evidence="2">Chromosome</location>
        <location evidence="2">Centromere</location>
        <location evidence="2">Kinetochore</location>
    </subcellularLocation>
    <text evidence="2">Associated with kinetochores.</text>
</comment>
<comment type="similarity">
    <text evidence="4">Belongs to the SPC25 family.</text>
</comment>
<evidence type="ECO:0000250" key="1"/>
<evidence type="ECO:0000250" key="2">
    <source>
        <dbReference type="UniProtKB" id="P40014"/>
    </source>
</evidence>
<evidence type="ECO:0000255" key="3"/>
<evidence type="ECO:0000305" key="4"/>
<gene>
    <name type="primary">SPC25</name>
    <name type="ordered locus">AFR679C</name>
</gene>
<dbReference type="EMBL" id="AE016819">
    <property type="protein sequence ID" value="AAS54051.1"/>
    <property type="molecule type" value="Genomic_DNA"/>
</dbReference>
<dbReference type="RefSeq" id="NP_986227.1">
    <property type="nucleotide sequence ID" value="NM_212363.1"/>
</dbReference>
<dbReference type="SMR" id="Q751Z6"/>
<dbReference type="STRING" id="284811.Q751Z6"/>
<dbReference type="EnsemblFungi" id="AAS54051">
    <property type="protein sequence ID" value="AAS54051"/>
    <property type="gene ID" value="AGOS_AFR679C"/>
</dbReference>
<dbReference type="GeneID" id="4622516"/>
<dbReference type="KEGG" id="ago:AGOS_AFR679C"/>
<dbReference type="eggNOG" id="KOG4657">
    <property type="taxonomic scope" value="Eukaryota"/>
</dbReference>
<dbReference type="HOGENOM" id="CLU_085127_1_0_1"/>
<dbReference type="InParanoid" id="Q751Z6"/>
<dbReference type="OMA" id="HEDQRMK"/>
<dbReference type="OrthoDB" id="4056921at2759"/>
<dbReference type="Proteomes" id="UP000000591">
    <property type="component" value="Chromosome VI"/>
</dbReference>
<dbReference type="GO" id="GO:0031262">
    <property type="term" value="C:Ndc80 complex"/>
    <property type="evidence" value="ECO:0000250"/>
    <property type="project" value="UniProtKB"/>
</dbReference>
<dbReference type="GO" id="GO:0005634">
    <property type="term" value="C:nucleus"/>
    <property type="evidence" value="ECO:0007669"/>
    <property type="project" value="UniProtKB-SubCell"/>
</dbReference>
<dbReference type="GO" id="GO:0051301">
    <property type="term" value="P:cell division"/>
    <property type="evidence" value="ECO:0007669"/>
    <property type="project" value="UniProtKB-KW"/>
</dbReference>
<dbReference type="GO" id="GO:0007059">
    <property type="term" value="P:chromosome segregation"/>
    <property type="evidence" value="ECO:0000318"/>
    <property type="project" value="GO_Central"/>
</dbReference>
<dbReference type="CDD" id="cd23784">
    <property type="entry name" value="RWD_Spc25"/>
    <property type="match status" value="1"/>
</dbReference>
<dbReference type="Gene3D" id="3.30.457.50">
    <property type="entry name" value="Chromosome segregation protein Spc25"/>
    <property type="match status" value="1"/>
</dbReference>
<dbReference type="InterPro" id="IPR045143">
    <property type="entry name" value="Spc25"/>
</dbReference>
<dbReference type="InterPro" id="IPR013255">
    <property type="entry name" value="Spc25_C"/>
</dbReference>
<dbReference type="PANTHER" id="PTHR14281:SF0">
    <property type="entry name" value="KINETOCHORE PROTEIN SPC25"/>
    <property type="match status" value="1"/>
</dbReference>
<dbReference type="PANTHER" id="PTHR14281">
    <property type="entry name" value="KINETOCHORE PROTEIN SPC25-RELATED"/>
    <property type="match status" value="1"/>
</dbReference>
<dbReference type="Pfam" id="PF08234">
    <property type="entry name" value="Spindle_Spc25"/>
    <property type="match status" value="1"/>
</dbReference>
<sequence>MSLEGFAELRAQMEAFQGRVHGHLGQQRHAMEQLLAAHRQEVEKLRLRTGAVQQQLARLAGEEQELRQNISSLQERTQHTTAQRDAYAAQRQKLAAERTQLEHDRAELHAMLARKQAELQRQREAIKRQHMRDNPEVRVYEQLLGLYVRASRPDSLEFAFRNVSEADARAECSFTLDLGADGYRVAAAQPPLPLERLRDLERDLGSSGDLPAFLKAIRAALVTAMAGQADA</sequence>
<organism>
    <name type="scientific">Eremothecium gossypii (strain ATCC 10895 / CBS 109.51 / FGSC 9923 / NRRL Y-1056)</name>
    <name type="common">Yeast</name>
    <name type="synonym">Ashbya gossypii</name>
    <dbReference type="NCBI Taxonomy" id="284811"/>
    <lineage>
        <taxon>Eukaryota</taxon>
        <taxon>Fungi</taxon>
        <taxon>Dikarya</taxon>
        <taxon>Ascomycota</taxon>
        <taxon>Saccharomycotina</taxon>
        <taxon>Saccharomycetes</taxon>
        <taxon>Saccharomycetales</taxon>
        <taxon>Saccharomycetaceae</taxon>
        <taxon>Eremothecium</taxon>
    </lineage>
</organism>
<name>SPC25_EREGS</name>
<proteinExistence type="inferred from homology"/>
<feature type="chain" id="PRO_0000246669" description="Probable kinetochore protein SPC25">
    <location>
        <begin position="1"/>
        <end position="231"/>
    </location>
</feature>
<feature type="coiled-coil region" evidence="3">
    <location>
        <begin position="23"/>
        <end position="132"/>
    </location>
</feature>
<keyword id="KW-0131">Cell cycle</keyword>
<keyword id="KW-0132">Cell division</keyword>
<keyword id="KW-0137">Centromere</keyword>
<keyword id="KW-0158">Chromosome</keyword>
<keyword id="KW-0175">Coiled coil</keyword>
<keyword id="KW-0995">Kinetochore</keyword>
<keyword id="KW-0498">Mitosis</keyword>
<keyword id="KW-0539">Nucleus</keyword>
<keyword id="KW-1185">Reference proteome</keyword>